<proteinExistence type="evidence at protein level"/>
<reference key="1">
    <citation type="journal article" date="1989" name="J. Biol. Chem.">
        <title>Purification of a DNA replication terminus (ter) site-binding protein in Escherichia coli and identification of the structural gene.</title>
        <authorList>
            <person name="Hidaka M."/>
            <person name="Kobayashi T."/>
            <person name="Takenaka S."/>
            <person name="Takeya H."/>
            <person name="Horiuchi T."/>
        </authorList>
    </citation>
    <scope>NUCLEOTIDE SEQUENCE [GENOMIC DNA]</scope>
    <scope>PROTEIN SEQUENCE OF 2-46</scope>
</reference>
<reference key="2">
    <citation type="journal article" date="1989" name="Proc. Natl. Acad. Sci. U.S.A.">
        <title>tus, the trans-acting gene required for termination of DNA replication in Escherichia coli, encodes a DNA-binding protein.</title>
        <authorList>
            <person name="Hill T.M."/>
            <person name="Tecklenburg M.L."/>
            <person name="Pelletier A.J."/>
            <person name="Kuempel P.L."/>
        </authorList>
    </citation>
    <scope>NUCLEOTIDE SEQUENCE [GENOMIC DNA]</scope>
</reference>
<reference key="3">
    <citation type="journal article" date="1996" name="DNA Res.">
        <title>A 570-kb DNA sequence of the Escherichia coli K-12 genome corresponding to the 28.0-40.1 min region on the linkage map.</title>
        <authorList>
            <person name="Aiba H."/>
            <person name="Baba T."/>
            <person name="Fujita K."/>
            <person name="Hayashi K."/>
            <person name="Inada T."/>
            <person name="Isono K."/>
            <person name="Itoh T."/>
            <person name="Kasai H."/>
            <person name="Kashimoto K."/>
            <person name="Kimura S."/>
            <person name="Kitakawa M."/>
            <person name="Kitagawa M."/>
            <person name="Makino K."/>
            <person name="Miki T."/>
            <person name="Mizobuchi K."/>
            <person name="Mori H."/>
            <person name="Mori T."/>
            <person name="Motomura K."/>
            <person name="Nakade S."/>
            <person name="Nakamura Y."/>
            <person name="Nashimoto H."/>
            <person name="Nishio Y."/>
            <person name="Oshima T."/>
            <person name="Saito N."/>
            <person name="Sampei G."/>
            <person name="Seki Y."/>
            <person name="Sivasundaram S."/>
            <person name="Tagami H."/>
            <person name="Takeda J."/>
            <person name="Takemoto K."/>
            <person name="Takeuchi Y."/>
            <person name="Wada C."/>
            <person name="Yamamoto Y."/>
            <person name="Horiuchi T."/>
        </authorList>
    </citation>
    <scope>NUCLEOTIDE SEQUENCE [LARGE SCALE GENOMIC DNA]</scope>
    <source>
        <strain>K12 / W3110 / ATCC 27325 / DSM 5911</strain>
    </source>
</reference>
<reference key="4">
    <citation type="journal article" date="1997" name="Science">
        <title>The complete genome sequence of Escherichia coli K-12.</title>
        <authorList>
            <person name="Blattner F.R."/>
            <person name="Plunkett G. III"/>
            <person name="Bloch C.A."/>
            <person name="Perna N.T."/>
            <person name="Burland V."/>
            <person name="Riley M."/>
            <person name="Collado-Vides J."/>
            <person name="Glasner J.D."/>
            <person name="Rode C.K."/>
            <person name="Mayhew G.F."/>
            <person name="Gregor J."/>
            <person name="Davis N.W."/>
            <person name="Kirkpatrick H.A."/>
            <person name="Goeden M.A."/>
            <person name="Rose D.J."/>
            <person name="Mau B."/>
            <person name="Shao Y."/>
        </authorList>
    </citation>
    <scope>NUCLEOTIDE SEQUENCE [LARGE SCALE GENOMIC DNA]</scope>
    <source>
        <strain>K12 / MG1655 / ATCC 47076</strain>
    </source>
</reference>
<reference key="5">
    <citation type="journal article" date="2006" name="Mol. Syst. Biol.">
        <title>Highly accurate genome sequences of Escherichia coli K-12 strains MG1655 and W3110.</title>
        <authorList>
            <person name="Hayashi K."/>
            <person name="Morooka N."/>
            <person name="Yamamoto Y."/>
            <person name="Fujita K."/>
            <person name="Isono K."/>
            <person name="Choi S."/>
            <person name="Ohtsubo E."/>
            <person name="Baba T."/>
            <person name="Wanner B.L."/>
            <person name="Mori H."/>
            <person name="Horiuchi T."/>
        </authorList>
    </citation>
    <scope>NUCLEOTIDE SEQUENCE [LARGE SCALE GENOMIC DNA]</scope>
    <source>
        <strain>K12 / W3110 / ATCC 27325 / DSM 5911</strain>
    </source>
</reference>
<reference key="6">
    <citation type="journal article" date="1986" name="Biochem. J.">
        <title>Structural and functional relationships between fumarase and aspartase. Nucleotide sequences of the fumarase (fumC) and aspartase (aspA) genes of Escherichia coli K12.</title>
        <authorList>
            <person name="Woods S.A."/>
            <person name="Miles J.S."/>
            <person name="Roberts R.E."/>
            <person name="Guest J.R."/>
        </authorList>
    </citation>
    <scope>NUCLEOTIDE SEQUENCE [GENOMIC DNA] OF 81-309</scope>
    <source>
        <strain>K12</strain>
    </source>
</reference>
<reference key="7">
    <citation type="journal article" date="1996" name="Nature">
        <title>Structure of a replication-terminator protein complexed with DNA.</title>
        <authorList>
            <person name="Kamada K."/>
            <person name="Horiuchi T."/>
            <person name="Ohsumi K."/>
            <person name="Shimamoto N."/>
            <person name="Morikawa K."/>
        </authorList>
    </citation>
    <scope>X-RAY CRYSTALLOGRAPHY (2.7 ANGSTROMS)</scope>
</reference>
<reference key="8">
    <citation type="journal article" date="1996" name="Biochemistry">
        <title>Proline pipe helix: structure of the tus proline repeat determined by 1H NMR.</title>
        <authorList>
            <person name="Butcher D.J."/>
            <person name="Nedved M.L."/>
            <person name="Neiss T.G."/>
            <person name="Moe G.R."/>
        </authorList>
    </citation>
    <scope>STRUCTURE BY NMR OF 223-244</scope>
</reference>
<gene>
    <name evidence="1" type="primary">tus</name>
    <name type="synonym">tau</name>
    <name type="ordered locus">b1610</name>
    <name type="ordered locus">JW1602</name>
</gene>
<dbReference type="EMBL" id="D90037">
    <property type="protein sequence ID" value="BAA14085.1"/>
    <property type="molecule type" value="Genomic_DNA"/>
</dbReference>
<dbReference type="EMBL" id="U41101">
    <property type="protein sequence ID" value="AAA82083.1"/>
    <property type="molecule type" value="Genomic_DNA"/>
</dbReference>
<dbReference type="EMBL" id="U00096">
    <property type="protein sequence ID" value="AAC74682.1"/>
    <property type="molecule type" value="Genomic_DNA"/>
</dbReference>
<dbReference type="EMBL" id="AP009048">
    <property type="protein sequence ID" value="BAA15348.1"/>
    <property type="molecule type" value="Genomic_DNA"/>
</dbReference>
<dbReference type="EMBL" id="X04065">
    <property type="protein sequence ID" value="CAA27699.1"/>
    <property type="molecule type" value="Genomic_DNA"/>
</dbReference>
<dbReference type="PIR" id="B32161">
    <property type="entry name" value="DNECTS"/>
</dbReference>
<dbReference type="RefSeq" id="NP_416127.1">
    <property type="nucleotide sequence ID" value="NC_000913.3"/>
</dbReference>
<dbReference type="RefSeq" id="WP_000135181.1">
    <property type="nucleotide sequence ID" value="NZ_SSZK01000001.1"/>
</dbReference>
<dbReference type="PDB" id="1ECR">
    <property type="method" value="X-ray"/>
    <property type="resolution" value="2.70 A"/>
    <property type="chains" value="A=1-309"/>
</dbReference>
<dbReference type="PDB" id="1SUT">
    <property type="method" value="NMR"/>
    <property type="chains" value="A=223-244"/>
</dbReference>
<dbReference type="PDB" id="2EWJ">
    <property type="method" value="X-ray"/>
    <property type="resolution" value="2.70 A"/>
    <property type="chains" value="A=1-309"/>
</dbReference>
<dbReference type="PDB" id="2I05">
    <property type="method" value="X-ray"/>
    <property type="resolution" value="2.60 A"/>
    <property type="chains" value="A=1-309"/>
</dbReference>
<dbReference type="PDB" id="2I06">
    <property type="method" value="X-ray"/>
    <property type="resolution" value="2.20 A"/>
    <property type="chains" value="A=1-309"/>
</dbReference>
<dbReference type="PDB" id="4XR0">
    <property type="method" value="X-ray"/>
    <property type="resolution" value="2.80 A"/>
    <property type="chains" value="A=1-309"/>
</dbReference>
<dbReference type="PDB" id="4XR1">
    <property type="method" value="X-ray"/>
    <property type="resolution" value="2.40 A"/>
    <property type="chains" value="A=1-309"/>
</dbReference>
<dbReference type="PDB" id="4XR2">
    <property type="method" value="X-ray"/>
    <property type="resolution" value="2.35 A"/>
    <property type="chains" value="A=1-309"/>
</dbReference>
<dbReference type="PDB" id="4XR3">
    <property type="method" value="X-ray"/>
    <property type="resolution" value="2.70 A"/>
    <property type="chains" value="A=1-309"/>
</dbReference>
<dbReference type="PDBsum" id="1ECR"/>
<dbReference type="PDBsum" id="1SUT"/>
<dbReference type="PDBsum" id="2EWJ"/>
<dbReference type="PDBsum" id="2I05"/>
<dbReference type="PDBsum" id="2I06"/>
<dbReference type="PDBsum" id="4XR0"/>
<dbReference type="PDBsum" id="4XR1"/>
<dbReference type="PDBsum" id="4XR2"/>
<dbReference type="PDBsum" id="4XR3"/>
<dbReference type="SMR" id="P16525"/>
<dbReference type="BioGRID" id="4260254">
    <property type="interactions" value="87"/>
</dbReference>
<dbReference type="BioGRID" id="849524">
    <property type="interactions" value="1"/>
</dbReference>
<dbReference type="DIP" id="DIP-11056N"/>
<dbReference type="FunCoup" id="P16525">
    <property type="interactions" value="35"/>
</dbReference>
<dbReference type="IntAct" id="P16525">
    <property type="interactions" value="2"/>
</dbReference>
<dbReference type="MINT" id="P16525"/>
<dbReference type="STRING" id="511145.b1610"/>
<dbReference type="jPOST" id="P16525"/>
<dbReference type="PaxDb" id="511145-b1610"/>
<dbReference type="EnsemblBacteria" id="AAC74682">
    <property type="protein sequence ID" value="AAC74682"/>
    <property type="gene ID" value="b1610"/>
</dbReference>
<dbReference type="GeneID" id="945135"/>
<dbReference type="KEGG" id="ecj:JW1602"/>
<dbReference type="KEGG" id="eco:b1610"/>
<dbReference type="KEGG" id="ecoc:C3026_09265"/>
<dbReference type="PATRIC" id="fig|1411691.4.peg.652"/>
<dbReference type="EchoBASE" id="EB1031"/>
<dbReference type="eggNOG" id="ENOG502Z895">
    <property type="taxonomic scope" value="Bacteria"/>
</dbReference>
<dbReference type="HOGENOM" id="CLU_078181_0_0_6"/>
<dbReference type="InParanoid" id="P16525"/>
<dbReference type="OMA" id="FGWANKN"/>
<dbReference type="OrthoDB" id="6298545at2"/>
<dbReference type="PhylomeDB" id="P16525"/>
<dbReference type="BioCyc" id="EcoCyc:EG11038-MONOMER"/>
<dbReference type="EvolutionaryTrace" id="P16525"/>
<dbReference type="PRO" id="PR:P16525"/>
<dbReference type="Proteomes" id="UP000000625">
    <property type="component" value="Chromosome"/>
</dbReference>
<dbReference type="GO" id="GO:0005737">
    <property type="term" value="C:cytoplasm"/>
    <property type="evidence" value="ECO:0007669"/>
    <property type="project" value="UniProtKB-SubCell"/>
</dbReference>
<dbReference type="GO" id="GO:0043565">
    <property type="term" value="F:sequence-specific DNA binding"/>
    <property type="evidence" value="ECO:0000314"/>
    <property type="project" value="EcoCyc"/>
</dbReference>
<dbReference type="GO" id="GO:0006274">
    <property type="term" value="P:DNA replication termination"/>
    <property type="evidence" value="ECO:0000314"/>
    <property type="project" value="EcoCyc"/>
</dbReference>
<dbReference type="GO" id="GO:0071807">
    <property type="term" value="P:replication fork arrest involved in DNA replication termination"/>
    <property type="evidence" value="ECO:0000314"/>
    <property type="project" value="EcoCyc"/>
</dbReference>
<dbReference type="Gene3D" id="3.30.54.10">
    <property type="match status" value="1"/>
</dbReference>
<dbReference type="Gene3D" id="3.50.14.10">
    <property type="entry name" value="Replication terminator Tus, domain 1 superfamily/Replication terminator Tus"/>
    <property type="match status" value="1"/>
</dbReference>
<dbReference type="HAMAP" id="MF_00483">
    <property type="entry name" value="Rep_term_Tus"/>
    <property type="match status" value="1"/>
</dbReference>
<dbReference type="InterPro" id="IPR008865">
    <property type="entry name" value="DNA_replication_term_site-bd"/>
</dbReference>
<dbReference type="InterPro" id="IPR036381">
    <property type="entry name" value="Tus_dom1"/>
</dbReference>
<dbReference type="InterPro" id="IPR036384">
    <property type="entry name" value="Tus_sf"/>
</dbReference>
<dbReference type="NCBIfam" id="TIGR02648">
    <property type="entry name" value="rep_term_tus"/>
    <property type="match status" value="1"/>
</dbReference>
<dbReference type="Pfam" id="PF05472">
    <property type="entry name" value="Ter"/>
    <property type="match status" value="1"/>
</dbReference>
<dbReference type="SUPFAM" id="SSF56596">
    <property type="entry name" value="Replication terminator protein (Tus)"/>
    <property type="match status" value="1"/>
</dbReference>
<keyword id="KW-0002">3D-structure</keyword>
<keyword id="KW-0963">Cytoplasm</keyword>
<keyword id="KW-0903">Direct protein sequencing</keyword>
<keyword id="KW-0235">DNA replication</keyword>
<keyword id="KW-0238">DNA-binding</keyword>
<keyword id="KW-1185">Reference proteome</keyword>
<feature type="chain" id="PRO_0000049413" description="DNA replication terminus site-binding protein">
    <location>
        <begin position="1"/>
        <end position="309"/>
    </location>
</feature>
<feature type="sequence conflict" description="In Ref. 6; CAA27699." evidence="2" ref="6">
    <original>NRSSKAAVRLPGVLCYQV</original>
    <variation>SQQQGHCPSAWLLCSGS</variation>
    <location>
        <begin position="85"/>
        <end position="102"/>
    </location>
</feature>
<feature type="sequence conflict" description="In Ref. 6; CAA27699." evidence="2" ref="6">
    <original>KT</original>
    <variation>EA</variation>
    <location>
        <begin position="121"/>
        <end position="122"/>
    </location>
</feature>
<feature type="sequence conflict" description="In Ref. 6; CAA27699." evidence="2" ref="6">
    <original>L</original>
    <variation>I</variation>
    <location>
        <position position="134"/>
    </location>
</feature>
<feature type="sequence conflict" description="In Ref. 6; CAA27699." evidence="2" ref="6">
    <original>L</original>
    <variation>V</variation>
    <location>
        <position position="150"/>
    </location>
</feature>
<feature type="helix" evidence="3">
    <location>
        <begin position="6"/>
        <end position="28"/>
    </location>
</feature>
<feature type="strand" evidence="3">
    <location>
        <begin position="33"/>
        <end position="40"/>
    </location>
</feature>
<feature type="helix" evidence="3">
    <location>
        <begin position="46"/>
        <end position="48"/>
    </location>
</feature>
<feature type="strand" evidence="4">
    <location>
        <begin position="49"/>
        <end position="51"/>
    </location>
</feature>
<feature type="strand" evidence="3">
    <location>
        <begin position="54"/>
        <end position="56"/>
    </location>
</feature>
<feature type="strand" evidence="3">
    <location>
        <begin position="59"/>
        <end position="62"/>
    </location>
</feature>
<feature type="helix" evidence="3">
    <location>
        <begin position="63"/>
        <end position="73"/>
    </location>
</feature>
<feature type="helix" evidence="3">
    <location>
        <begin position="79"/>
        <end position="81"/>
    </location>
</feature>
<feature type="strand" evidence="5">
    <location>
        <begin position="84"/>
        <end position="86"/>
    </location>
</feature>
<feature type="strand" evidence="3">
    <location>
        <begin position="88"/>
        <end position="90"/>
    </location>
</feature>
<feature type="strand" evidence="3">
    <location>
        <begin position="96"/>
        <end position="102"/>
    </location>
</feature>
<feature type="helix" evidence="3">
    <location>
        <begin position="104"/>
        <end position="129"/>
    </location>
</feature>
<feature type="turn" evidence="5">
    <location>
        <begin position="130"/>
        <end position="132"/>
    </location>
</feature>
<feature type="turn" evidence="3">
    <location>
        <begin position="136"/>
        <end position="138"/>
    </location>
</feature>
<feature type="helix" evidence="3">
    <location>
        <begin position="139"/>
        <end position="146"/>
    </location>
</feature>
<feature type="helix" evidence="3">
    <location>
        <begin position="152"/>
        <end position="156"/>
    </location>
</feature>
<feature type="strand" evidence="3">
    <location>
        <begin position="161"/>
        <end position="164"/>
    </location>
</feature>
<feature type="strand" evidence="3">
    <location>
        <begin position="167"/>
        <end position="173"/>
    </location>
</feature>
<feature type="strand" evidence="3">
    <location>
        <begin position="176"/>
        <end position="181"/>
    </location>
</feature>
<feature type="helix" evidence="3">
    <location>
        <begin position="183"/>
        <end position="193"/>
    </location>
</feature>
<feature type="strand" evidence="3">
    <location>
        <begin position="194"/>
        <end position="197"/>
    </location>
</feature>
<feature type="helix" evidence="3">
    <location>
        <begin position="206"/>
        <end position="220"/>
    </location>
</feature>
<feature type="strand" evidence="3">
    <location>
        <begin position="228"/>
        <end position="233"/>
    </location>
</feature>
<feature type="strand" evidence="3">
    <location>
        <begin position="237"/>
        <end position="244"/>
    </location>
</feature>
<feature type="strand" evidence="3">
    <location>
        <begin position="247"/>
        <end position="254"/>
    </location>
</feature>
<feature type="strand" evidence="3">
    <location>
        <begin position="259"/>
        <end position="264"/>
    </location>
</feature>
<feature type="helix" evidence="3">
    <location>
        <begin position="265"/>
        <end position="267"/>
    </location>
</feature>
<feature type="helix" evidence="3">
    <location>
        <begin position="282"/>
        <end position="284"/>
    </location>
</feature>
<feature type="strand" evidence="3">
    <location>
        <begin position="296"/>
        <end position="300"/>
    </location>
</feature>
<feature type="helix" evidence="3">
    <location>
        <begin position="301"/>
        <end position="303"/>
    </location>
</feature>
<feature type="strand" evidence="3">
    <location>
        <begin position="305"/>
        <end position="308"/>
    </location>
</feature>
<sequence length="309" mass="35783">MARYDLVDRLNTTFRQMEQELAIFAAHLEQHKLLVARVFSLPEVKKEDEHNPLNRIEVKQHLGNDAQSLALRHFRHLFIQQQSENRSSKAAVRLPGVLCYQVDNLSQAALVSHIQHINKLKTTFEHIVTVESELPTAARFEWVHRHLPGLITLNAYRTLTVLHDPATLRFGWANKHIIKNLHRDEVLAQLEKSLKSPRSVAPWTREEWQRKLEREYQDIAALPQNAKLKIKRPVKVQPIARVWYKGDQKQVQHACPTPLIALINRDNGAGVPDVGELLNYDADNVQHRYKPQAQPLRLIIPRLHLYVAD</sequence>
<name>TUS_ECOLI</name>
<evidence type="ECO:0000255" key="1">
    <source>
        <dbReference type="HAMAP-Rule" id="MF_00483"/>
    </source>
</evidence>
<evidence type="ECO:0000305" key="2"/>
<evidence type="ECO:0007829" key="3">
    <source>
        <dbReference type="PDB" id="2I06"/>
    </source>
</evidence>
<evidence type="ECO:0007829" key="4">
    <source>
        <dbReference type="PDB" id="4XR0"/>
    </source>
</evidence>
<evidence type="ECO:0007829" key="5">
    <source>
        <dbReference type="PDB" id="4XR2"/>
    </source>
</evidence>
<organism>
    <name type="scientific">Escherichia coli (strain K12)</name>
    <dbReference type="NCBI Taxonomy" id="83333"/>
    <lineage>
        <taxon>Bacteria</taxon>
        <taxon>Pseudomonadati</taxon>
        <taxon>Pseudomonadota</taxon>
        <taxon>Gammaproteobacteria</taxon>
        <taxon>Enterobacterales</taxon>
        <taxon>Enterobacteriaceae</taxon>
        <taxon>Escherichia</taxon>
    </lineage>
</organism>
<comment type="function">
    <text>Trans-acting protein required for termination of DNA replication. Binds to DNA replication terminator sequences (terA to terF) to prevent the passage of replication forks. The termination efficiency will be affected by the affinity of this protein for the terminator sequence.</text>
</comment>
<comment type="subunit">
    <text>Monomer.</text>
</comment>
<comment type="subcellular location">
    <subcellularLocation>
        <location>Cytoplasm</location>
    </subcellularLocation>
</comment>
<comment type="similarity">
    <text evidence="1">Belongs to the Tus family.</text>
</comment>
<protein>
    <recommendedName>
        <fullName evidence="1">DNA replication terminus site-binding protein</fullName>
        <shortName evidence="1">Ter-binding protein</shortName>
    </recommendedName>
</protein>
<accession>P16525</accession>
<accession>Q59400</accession>